<protein>
    <recommendedName>
        <fullName evidence="4">Large ribosomal subunit protein uL29m</fullName>
    </recommendedName>
    <alternativeName>
        <fullName>54S ribosomal protein L4, mitochondrial</fullName>
    </alternativeName>
</protein>
<gene>
    <name type="primary">MRPL4</name>
    <name type="ORF">MGG_07138</name>
</gene>
<proteinExistence type="inferred from homology"/>
<name>RM04_PYRO7</name>
<comment type="subunit">
    <text evidence="1">Component of the mitochondrial large ribosomal subunit. Mature mitochondrial ribosomes consist of a small (37S) and a large (54S) subunit. The 37S subunit contains at least 33 different proteins and 1 molecule of RNA (15S). The 54S subunit contains at least 45 different proteins and 1 molecule of RNA (21S) (By similarity).</text>
</comment>
<comment type="subcellular location">
    <subcellularLocation>
        <location evidence="1">Mitochondrion</location>
    </subcellularLocation>
</comment>
<comment type="similarity">
    <text evidence="4">Belongs to the universal ribosomal protein uL29 family.</text>
</comment>
<accession>A4RHR8</accession>
<accession>G4MT61</accession>
<dbReference type="EMBL" id="CM001232">
    <property type="protein sequence ID" value="EHA55526.1"/>
    <property type="molecule type" value="Genomic_DNA"/>
</dbReference>
<dbReference type="RefSeq" id="XP_003715333.1">
    <property type="nucleotide sequence ID" value="XM_003715285.1"/>
</dbReference>
<dbReference type="SMR" id="A4RHR8"/>
<dbReference type="STRING" id="242507.A4RHR8"/>
<dbReference type="EnsemblFungi" id="MGG_15860T0">
    <property type="protein sequence ID" value="MGG_15860T0"/>
    <property type="gene ID" value="MGG_15860"/>
</dbReference>
<dbReference type="KEGG" id="mgr:MGG_15860"/>
<dbReference type="VEuPathDB" id="FungiDB:MGG_15860"/>
<dbReference type="eggNOG" id="KOG3331">
    <property type="taxonomic scope" value="Eukaryota"/>
</dbReference>
<dbReference type="HOGENOM" id="CLU_063281_1_1_1"/>
<dbReference type="InParanoid" id="A4RHR8"/>
<dbReference type="OMA" id="YAHGRAW"/>
<dbReference type="OrthoDB" id="270763at2759"/>
<dbReference type="Proteomes" id="UP000009058">
    <property type="component" value="Chromosome 2"/>
</dbReference>
<dbReference type="GO" id="GO:0005762">
    <property type="term" value="C:mitochondrial large ribosomal subunit"/>
    <property type="evidence" value="ECO:0007669"/>
    <property type="project" value="TreeGrafter"/>
</dbReference>
<dbReference type="GO" id="GO:0003735">
    <property type="term" value="F:structural constituent of ribosome"/>
    <property type="evidence" value="ECO:0007669"/>
    <property type="project" value="InterPro"/>
</dbReference>
<dbReference type="GO" id="GO:0032543">
    <property type="term" value="P:mitochondrial translation"/>
    <property type="evidence" value="ECO:0007669"/>
    <property type="project" value="TreeGrafter"/>
</dbReference>
<dbReference type="Gene3D" id="6.10.330.20">
    <property type="match status" value="1"/>
</dbReference>
<dbReference type="InterPro" id="IPR038340">
    <property type="entry name" value="MRP-L47_sf"/>
</dbReference>
<dbReference type="InterPro" id="IPR010729">
    <property type="entry name" value="Ribosomal_uL29_mit"/>
</dbReference>
<dbReference type="PANTHER" id="PTHR21183:SF18">
    <property type="entry name" value="LARGE RIBOSOMAL SUBUNIT PROTEIN UL29M"/>
    <property type="match status" value="1"/>
</dbReference>
<dbReference type="PANTHER" id="PTHR21183">
    <property type="entry name" value="RIBOSOMAL PROTEIN L47, MITOCHONDRIAL-RELATED"/>
    <property type="match status" value="1"/>
</dbReference>
<dbReference type="Pfam" id="PF06984">
    <property type="entry name" value="MRP-L47"/>
    <property type="match status" value="1"/>
</dbReference>
<feature type="transit peptide" description="Mitochondrion" evidence="2">
    <location>
        <begin position="1"/>
        <end position="38"/>
    </location>
</feature>
<feature type="chain" id="PRO_0000372405" description="Large ribosomal subunit protein uL29m">
    <location>
        <begin position="39"/>
        <end position="302"/>
    </location>
</feature>
<feature type="region of interest" description="Disordered" evidence="3">
    <location>
        <begin position="255"/>
        <end position="302"/>
    </location>
</feature>
<reference key="1">
    <citation type="journal article" date="2005" name="Nature">
        <title>The genome sequence of the rice blast fungus Magnaporthe grisea.</title>
        <authorList>
            <person name="Dean R.A."/>
            <person name="Talbot N.J."/>
            <person name="Ebbole D.J."/>
            <person name="Farman M.L."/>
            <person name="Mitchell T.K."/>
            <person name="Orbach M.J."/>
            <person name="Thon M.R."/>
            <person name="Kulkarni R."/>
            <person name="Xu J.-R."/>
            <person name="Pan H."/>
            <person name="Read N.D."/>
            <person name="Lee Y.-H."/>
            <person name="Carbone I."/>
            <person name="Brown D."/>
            <person name="Oh Y.Y."/>
            <person name="Donofrio N."/>
            <person name="Jeong J.S."/>
            <person name="Soanes D.M."/>
            <person name="Djonovic S."/>
            <person name="Kolomiets E."/>
            <person name="Rehmeyer C."/>
            <person name="Li W."/>
            <person name="Harding M."/>
            <person name="Kim S."/>
            <person name="Lebrun M.-H."/>
            <person name="Bohnert H."/>
            <person name="Coughlan S."/>
            <person name="Butler J."/>
            <person name="Calvo S.E."/>
            <person name="Ma L.-J."/>
            <person name="Nicol R."/>
            <person name="Purcell S."/>
            <person name="Nusbaum C."/>
            <person name="Galagan J.E."/>
            <person name="Birren B.W."/>
        </authorList>
    </citation>
    <scope>NUCLEOTIDE SEQUENCE [LARGE SCALE GENOMIC DNA]</scope>
    <source>
        <strain>70-15 / ATCC MYA-4617 / FGSC 8958</strain>
    </source>
</reference>
<organism>
    <name type="scientific">Pyricularia oryzae (strain 70-15 / ATCC MYA-4617 / FGSC 8958)</name>
    <name type="common">Rice blast fungus</name>
    <name type="synonym">Magnaporthe oryzae</name>
    <dbReference type="NCBI Taxonomy" id="242507"/>
    <lineage>
        <taxon>Eukaryota</taxon>
        <taxon>Fungi</taxon>
        <taxon>Dikarya</taxon>
        <taxon>Ascomycota</taxon>
        <taxon>Pezizomycotina</taxon>
        <taxon>Sordariomycetes</taxon>
        <taxon>Sordariomycetidae</taxon>
        <taxon>Magnaporthales</taxon>
        <taxon>Pyriculariaceae</taxon>
        <taxon>Pyricularia</taxon>
    </lineage>
</organism>
<evidence type="ECO:0000250" key="1"/>
<evidence type="ECO:0000255" key="2"/>
<evidence type="ECO:0000256" key="3">
    <source>
        <dbReference type="SAM" id="MobiDB-lite"/>
    </source>
</evidence>
<evidence type="ECO:0000305" key="4"/>
<sequence length="302" mass="33609">MASSGAARPAASRVLQRCQPFSSSTSCAAPVTTWRTLARPSTAAATAQATTQQLRLLSISMPLQKRRTTRDNNRLRGQSTIHRSGIRRPLSVSEEDIPQPVQDEGVGKMREEDTDPDHGLWGFFYDKQLVPTPKQLSAHGRSWTVQELRGKSWEDLHALWWMCCRERNRIATAIRTRQFIGIKKDNPFDEAEARGRTVNKTMQAIKHVLTERFYAWEDARKLAMEDPEINLSGKGPIYTPSLHFESADTSSYIEEPVADHLETPETSGQEKVGELSPAGAVDPSTILASKTGKPVTDAPRSS</sequence>
<keyword id="KW-0496">Mitochondrion</keyword>
<keyword id="KW-1185">Reference proteome</keyword>
<keyword id="KW-0687">Ribonucleoprotein</keyword>
<keyword id="KW-0689">Ribosomal protein</keyword>
<keyword id="KW-0809">Transit peptide</keyword>